<feature type="chain" id="PRO_0000358863" description="Peptidyl-prolyl cis-trans isomerase 9">
    <location>
        <begin position="1"/>
        <end position="610"/>
    </location>
</feature>
<feature type="repeat" description="WD 1">
    <location>
        <begin position="45"/>
        <end position="83"/>
    </location>
</feature>
<feature type="repeat" description="WD 2">
    <location>
        <begin position="88"/>
        <end position="127"/>
    </location>
</feature>
<feature type="repeat" description="WD 3">
    <location>
        <begin position="177"/>
        <end position="216"/>
    </location>
</feature>
<feature type="domain" description="PPIase cyclophilin-type" evidence="2">
    <location>
        <begin position="453"/>
        <end position="607"/>
    </location>
</feature>
<feature type="modified residue" description="Phosphoserine" evidence="4">
    <location>
        <position position="13"/>
    </location>
</feature>
<keyword id="KW-0413">Isomerase</keyword>
<keyword id="KW-0539">Nucleus</keyword>
<keyword id="KW-0597">Phosphoprotein</keyword>
<keyword id="KW-1185">Reference proteome</keyword>
<keyword id="KW-0677">Repeat</keyword>
<keyword id="KW-0697">Rotamase</keyword>
<keyword id="KW-0853">WD repeat</keyword>
<comment type="function">
    <text evidence="1">PPIases accelerate the folding of proteins. It catalyzes the cis-trans isomerization of proline imidic peptide bonds in oligopeptides (By similarity).</text>
</comment>
<comment type="catalytic activity">
    <reaction>
        <text>[protein]-peptidylproline (omega=180) = [protein]-peptidylproline (omega=0)</text>
        <dbReference type="Rhea" id="RHEA:16237"/>
        <dbReference type="Rhea" id="RHEA-COMP:10747"/>
        <dbReference type="Rhea" id="RHEA-COMP:10748"/>
        <dbReference type="ChEBI" id="CHEBI:83833"/>
        <dbReference type="ChEBI" id="CHEBI:83834"/>
        <dbReference type="EC" id="5.2.1.8"/>
    </reaction>
</comment>
<comment type="subcellular location">
    <subcellularLocation>
        <location evidence="3">Nucleus</location>
    </subcellularLocation>
</comment>
<comment type="similarity">
    <text evidence="5">Belongs to the cyclophilin-type PPIase family.</text>
</comment>
<proteinExistence type="evidence at protein level"/>
<reference key="1">
    <citation type="journal article" date="2002" name="Nature">
        <title>The genome sequence of Schizosaccharomyces pombe.</title>
        <authorList>
            <person name="Wood V."/>
            <person name="Gwilliam R."/>
            <person name="Rajandream M.A."/>
            <person name="Lyne M.H."/>
            <person name="Lyne R."/>
            <person name="Stewart A."/>
            <person name="Sgouros J.G."/>
            <person name="Peat N."/>
            <person name="Hayles J."/>
            <person name="Baker S.G."/>
            <person name="Basham D."/>
            <person name="Bowman S."/>
            <person name="Brooks K."/>
            <person name="Brown D."/>
            <person name="Brown S."/>
            <person name="Chillingworth T."/>
            <person name="Churcher C.M."/>
            <person name="Collins M."/>
            <person name="Connor R."/>
            <person name="Cronin A."/>
            <person name="Davis P."/>
            <person name="Feltwell T."/>
            <person name="Fraser A."/>
            <person name="Gentles S."/>
            <person name="Goble A."/>
            <person name="Hamlin N."/>
            <person name="Harris D.E."/>
            <person name="Hidalgo J."/>
            <person name="Hodgson G."/>
            <person name="Holroyd S."/>
            <person name="Hornsby T."/>
            <person name="Howarth S."/>
            <person name="Huckle E.J."/>
            <person name="Hunt S."/>
            <person name="Jagels K."/>
            <person name="James K.D."/>
            <person name="Jones L."/>
            <person name="Jones M."/>
            <person name="Leather S."/>
            <person name="McDonald S."/>
            <person name="McLean J."/>
            <person name="Mooney P."/>
            <person name="Moule S."/>
            <person name="Mungall K.L."/>
            <person name="Murphy L.D."/>
            <person name="Niblett D."/>
            <person name="Odell C."/>
            <person name="Oliver K."/>
            <person name="O'Neil S."/>
            <person name="Pearson D."/>
            <person name="Quail M.A."/>
            <person name="Rabbinowitsch E."/>
            <person name="Rutherford K.M."/>
            <person name="Rutter S."/>
            <person name="Saunders D."/>
            <person name="Seeger K."/>
            <person name="Sharp S."/>
            <person name="Skelton J."/>
            <person name="Simmonds M.N."/>
            <person name="Squares R."/>
            <person name="Squares S."/>
            <person name="Stevens K."/>
            <person name="Taylor K."/>
            <person name="Taylor R.G."/>
            <person name="Tivey A."/>
            <person name="Walsh S.V."/>
            <person name="Warren T."/>
            <person name="Whitehead S."/>
            <person name="Woodward J.R."/>
            <person name="Volckaert G."/>
            <person name="Aert R."/>
            <person name="Robben J."/>
            <person name="Grymonprez B."/>
            <person name="Weltjens I."/>
            <person name="Vanstreels E."/>
            <person name="Rieger M."/>
            <person name="Schaefer M."/>
            <person name="Mueller-Auer S."/>
            <person name="Gabel C."/>
            <person name="Fuchs M."/>
            <person name="Duesterhoeft A."/>
            <person name="Fritzc C."/>
            <person name="Holzer E."/>
            <person name="Moestl D."/>
            <person name="Hilbert H."/>
            <person name="Borzym K."/>
            <person name="Langer I."/>
            <person name="Beck A."/>
            <person name="Lehrach H."/>
            <person name="Reinhardt R."/>
            <person name="Pohl T.M."/>
            <person name="Eger P."/>
            <person name="Zimmermann W."/>
            <person name="Wedler H."/>
            <person name="Wambutt R."/>
            <person name="Purnelle B."/>
            <person name="Goffeau A."/>
            <person name="Cadieu E."/>
            <person name="Dreano S."/>
            <person name="Gloux S."/>
            <person name="Lelaure V."/>
            <person name="Mottier S."/>
            <person name="Galibert F."/>
            <person name="Aves S.J."/>
            <person name="Xiang Z."/>
            <person name="Hunt C."/>
            <person name="Moore K."/>
            <person name="Hurst S.M."/>
            <person name="Lucas M."/>
            <person name="Rochet M."/>
            <person name="Gaillardin C."/>
            <person name="Tallada V.A."/>
            <person name="Garzon A."/>
            <person name="Thode G."/>
            <person name="Daga R.R."/>
            <person name="Cruzado L."/>
            <person name="Jimenez J."/>
            <person name="Sanchez M."/>
            <person name="del Rey F."/>
            <person name="Benito J."/>
            <person name="Dominguez A."/>
            <person name="Revuelta J.L."/>
            <person name="Moreno S."/>
            <person name="Armstrong J."/>
            <person name="Forsburg S.L."/>
            <person name="Cerutti L."/>
            <person name="Lowe T."/>
            <person name="McCombie W.R."/>
            <person name="Paulsen I."/>
            <person name="Potashkin J."/>
            <person name="Shpakovski G.V."/>
            <person name="Ussery D."/>
            <person name="Barrell B.G."/>
            <person name="Nurse P."/>
        </authorList>
    </citation>
    <scope>NUCLEOTIDE SEQUENCE [LARGE SCALE GENOMIC DNA]</scope>
    <source>
        <strain>972 / ATCC 24843</strain>
    </source>
</reference>
<reference key="2">
    <citation type="journal article" date="2006" name="Nat. Biotechnol.">
        <title>ORFeome cloning and global analysis of protein localization in the fission yeast Schizosaccharomyces pombe.</title>
        <authorList>
            <person name="Matsuyama A."/>
            <person name="Arai R."/>
            <person name="Yashiroda Y."/>
            <person name="Shirai A."/>
            <person name="Kamata A."/>
            <person name="Sekido S."/>
            <person name="Kobayashi Y."/>
            <person name="Hashimoto A."/>
            <person name="Hamamoto M."/>
            <person name="Hiraoka Y."/>
            <person name="Horinouchi S."/>
            <person name="Yoshida M."/>
        </authorList>
    </citation>
    <scope>SUBCELLULAR LOCATION [LARGE SCALE ANALYSIS]</scope>
</reference>
<reference key="3">
    <citation type="journal article" date="2008" name="J. Proteome Res.">
        <title>Phosphoproteome analysis of fission yeast.</title>
        <authorList>
            <person name="Wilson-Grady J.T."/>
            <person name="Villen J."/>
            <person name="Gygi S.P."/>
        </authorList>
    </citation>
    <scope>PHOSPHORYLATION [LARGE SCALE ANALYSIS] AT SER-13</scope>
    <scope>IDENTIFICATION BY MASS SPECTROMETRY</scope>
</reference>
<organism>
    <name type="scientific">Schizosaccharomyces pombe (strain 972 / ATCC 24843)</name>
    <name type="common">Fission yeast</name>
    <dbReference type="NCBI Taxonomy" id="284812"/>
    <lineage>
        <taxon>Eukaryota</taxon>
        <taxon>Fungi</taxon>
        <taxon>Dikarya</taxon>
        <taxon>Ascomycota</taxon>
        <taxon>Taphrinomycotina</taxon>
        <taxon>Schizosaccharomycetes</taxon>
        <taxon>Schizosaccharomycetales</taxon>
        <taxon>Schizosaccharomycetaceae</taxon>
        <taxon>Schizosaccharomyces</taxon>
    </lineage>
</organism>
<protein>
    <recommendedName>
        <fullName>Peptidyl-prolyl cis-trans isomerase 9</fullName>
        <shortName>PPIase cyp9</shortName>
        <ecNumber>5.2.1.8</ecNumber>
    </recommendedName>
    <alternativeName>
        <fullName>Cyclophilin 9</fullName>
    </alternativeName>
    <alternativeName>
        <fullName>Rotamase cyp9</fullName>
    </alternativeName>
</protein>
<gene>
    <name type="primary">cyp9</name>
    <name type="ORF">SPCC553.04</name>
</gene>
<name>CYP9_SCHPO</name>
<evidence type="ECO:0000250" key="1"/>
<evidence type="ECO:0000255" key="2">
    <source>
        <dbReference type="PROSITE-ProRule" id="PRU00156"/>
    </source>
</evidence>
<evidence type="ECO:0000269" key="3">
    <source>
    </source>
</evidence>
<evidence type="ECO:0000269" key="4">
    <source>
    </source>
</evidence>
<evidence type="ECO:0000305" key="5"/>
<dbReference type="EC" id="5.2.1.8"/>
<dbReference type="EMBL" id="CU329672">
    <property type="protein sequence ID" value="CAA19257.1"/>
    <property type="molecule type" value="Genomic_DNA"/>
</dbReference>
<dbReference type="PIR" id="T41399">
    <property type="entry name" value="T41399"/>
</dbReference>
<dbReference type="RefSeq" id="NP_587769.1">
    <property type="nucleotide sequence ID" value="NM_001022762.2"/>
</dbReference>
<dbReference type="SMR" id="O74942"/>
<dbReference type="BioGRID" id="276118">
    <property type="interactions" value="2"/>
</dbReference>
<dbReference type="FunCoup" id="O74942">
    <property type="interactions" value="866"/>
</dbReference>
<dbReference type="STRING" id="284812.O74942"/>
<dbReference type="iPTMnet" id="O74942"/>
<dbReference type="PaxDb" id="4896-SPCC553.04.1"/>
<dbReference type="EnsemblFungi" id="SPCC553.04.1">
    <property type="protein sequence ID" value="SPCC553.04.1:pep"/>
    <property type="gene ID" value="SPCC553.04"/>
</dbReference>
<dbReference type="GeneID" id="2539557"/>
<dbReference type="KEGG" id="spo:2539557"/>
<dbReference type="PomBase" id="SPCC553.04">
    <property type="gene designation" value="cyp9"/>
</dbReference>
<dbReference type="VEuPathDB" id="FungiDB:SPCC553.04"/>
<dbReference type="eggNOG" id="KOG0882">
    <property type="taxonomic scope" value="Eukaryota"/>
</dbReference>
<dbReference type="HOGENOM" id="CLU_012062_31_0_1"/>
<dbReference type="InParanoid" id="O74942"/>
<dbReference type="OMA" id="GMVEYWR"/>
<dbReference type="PhylomeDB" id="O74942"/>
<dbReference type="Reactome" id="R-SPO-72163">
    <property type="pathway name" value="mRNA Splicing - Major Pathway"/>
</dbReference>
<dbReference type="PRO" id="PR:O74942"/>
<dbReference type="Proteomes" id="UP000002485">
    <property type="component" value="Chromosome III"/>
</dbReference>
<dbReference type="GO" id="GO:0005634">
    <property type="term" value="C:nucleus"/>
    <property type="evidence" value="ECO:0007005"/>
    <property type="project" value="PomBase"/>
</dbReference>
<dbReference type="GO" id="GO:0003755">
    <property type="term" value="F:peptidyl-prolyl cis-trans isomerase activity"/>
    <property type="evidence" value="ECO:0000255"/>
    <property type="project" value="PomBase"/>
</dbReference>
<dbReference type="GO" id="GO:0006457">
    <property type="term" value="P:protein folding"/>
    <property type="evidence" value="ECO:0000318"/>
    <property type="project" value="GO_Central"/>
</dbReference>
<dbReference type="CDD" id="cd01927">
    <property type="entry name" value="cyclophilin_WD40"/>
    <property type="match status" value="1"/>
</dbReference>
<dbReference type="FunFam" id="2.40.100.10:FF:000003">
    <property type="entry name" value="Peptidylprolyl isomerase domain and WD repeat-containing 1"/>
    <property type="match status" value="1"/>
</dbReference>
<dbReference type="Gene3D" id="2.40.100.10">
    <property type="entry name" value="Cyclophilin-like"/>
    <property type="match status" value="1"/>
</dbReference>
<dbReference type="Gene3D" id="2.130.10.10">
    <property type="entry name" value="YVTN repeat-like/Quinoprotein amine dehydrogenase"/>
    <property type="match status" value="1"/>
</dbReference>
<dbReference type="InterPro" id="IPR029000">
    <property type="entry name" value="Cyclophilin-like_dom_sf"/>
</dbReference>
<dbReference type="InterPro" id="IPR020892">
    <property type="entry name" value="Cyclophilin-type_PPIase_CS"/>
</dbReference>
<dbReference type="InterPro" id="IPR002130">
    <property type="entry name" value="Cyclophilin-type_PPIase_dom"/>
</dbReference>
<dbReference type="InterPro" id="IPR044666">
    <property type="entry name" value="Cyclophilin_A-like"/>
</dbReference>
<dbReference type="InterPro" id="IPR015943">
    <property type="entry name" value="WD40/YVTN_repeat-like_dom_sf"/>
</dbReference>
<dbReference type="InterPro" id="IPR036322">
    <property type="entry name" value="WD40_repeat_dom_sf"/>
</dbReference>
<dbReference type="InterPro" id="IPR001680">
    <property type="entry name" value="WD40_rpt"/>
</dbReference>
<dbReference type="PANTHER" id="PTHR45625">
    <property type="entry name" value="PEPTIDYL-PROLYL CIS-TRANS ISOMERASE-RELATED"/>
    <property type="match status" value="1"/>
</dbReference>
<dbReference type="PANTHER" id="PTHR45625:SF4">
    <property type="entry name" value="PEPTIDYLPROLYL ISOMERASE DOMAIN AND WD REPEAT-CONTAINING PROTEIN 1"/>
    <property type="match status" value="1"/>
</dbReference>
<dbReference type="Pfam" id="PF00160">
    <property type="entry name" value="Pro_isomerase"/>
    <property type="match status" value="1"/>
</dbReference>
<dbReference type="Pfam" id="PF00400">
    <property type="entry name" value="WD40"/>
    <property type="match status" value="2"/>
</dbReference>
<dbReference type="PRINTS" id="PR00153">
    <property type="entry name" value="CSAPPISMRASE"/>
</dbReference>
<dbReference type="SMART" id="SM00320">
    <property type="entry name" value="WD40"/>
    <property type="match status" value="4"/>
</dbReference>
<dbReference type="SUPFAM" id="SSF50891">
    <property type="entry name" value="Cyclophilin-like"/>
    <property type="match status" value="1"/>
</dbReference>
<dbReference type="SUPFAM" id="SSF50978">
    <property type="entry name" value="WD40 repeat-like"/>
    <property type="match status" value="1"/>
</dbReference>
<dbReference type="PROSITE" id="PS00170">
    <property type="entry name" value="CSA_PPIASE_1"/>
    <property type="match status" value="1"/>
</dbReference>
<dbReference type="PROSITE" id="PS50072">
    <property type="entry name" value="CSA_PPIASE_2"/>
    <property type="match status" value="1"/>
</dbReference>
<dbReference type="PROSITE" id="PS50082">
    <property type="entry name" value="WD_REPEATS_2"/>
    <property type="match status" value="1"/>
</dbReference>
<dbReference type="PROSITE" id="PS50294">
    <property type="entry name" value="WD_REPEATS_REGION"/>
    <property type="match status" value="1"/>
</dbReference>
<sequence>MMDGASPVDRDVSPVGLPKKRIKQNHDQVFLHNLPDAPRYTKSYMHNAEIYKCFPTKSNYILSVSYDGYVKFWHKTPNGVEYIKEFHAHNAMLLSAELSQDERLFITGADDKSLKVFDVESIDLVNIIDLEFLPKAICCFNSPSLKTSLIAVSSAESPLIFFFESGGDGEVLYTVKKHTAPVHCLRYLSTLDCFLSIDIGGMVEYWSPEEPFQKPDTAELFNMKSQTDLYIFKKQKSVPTSLEVSHFENFWSTISYPDCKVRVFDTKSGRAILELDENPSNAAKKVEALFEKEDTESSYYMSHVELGRRIAIERDIEKHGLTVGTTAIFDESEKYLLYGSIVGIKVVSIDNGTVVRIYGKDEAVRFTRLSLYQQAPKKSNLPSLDVIASNNPLVEESFQKDPTLFATAWKKQRFYLFSNMSTKFTLSDRDVYNEQVLPVTNNEGRQENGNILLGKAAIIHTTQGDISIKLYPEEAPKAVQNFTTHAENGYYDNTIFHRIIKNFMIQGGDPLGDGTGGESIWKKDFEDEISPNLKHDRPFTVSMANSGPNTNGSQFFITTDLTPWLDGKHTIFARAYAGLDVVHRIEQGETDKYDRPLEPTKIINISIVYT</sequence>
<accession>O74942</accession>